<evidence type="ECO:0000255" key="1"/>
<evidence type="ECO:0000305" key="2"/>
<organism>
    <name type="scientific">Nostoc sp. (strain PCC 7120 / SAG 25.82 / UTEX 2576)</name>
    <dbReference type="NCBI Taxonomy" id="103690"/>
    <lineage>
        <taxon>Bacteria</taxon>
        <taxon>Bacillati</taxon>
        <taxon>Cyanobacteriota</taxon>
        <taxon>Cyanophyceae</taxon>
        <taxon>Nostocales</taxon>
        <taxon>Nostocaceae</taxon>
        <taxon>Nostoc</taxon>
    </lineage>
</organism>
<comment type="function">
    <text>Involved in chlorophyll biosynthesis; introduces a magnesium ion into protoporphyrin IX to yield Mg-protoporphyrin IX.</text>
</comment>
<comment type="catalytic activity">
    <reaction>
        <text>protoporphyrin IX + Mg(2+) + ATP + H2O = Mg-protoporphyrin IX + ADP + phosphate + 3 H(+)</text>
        <dbReference type="Rhea" id="RHEA:13961"/>
        <dbReference type="ChEBI" id="CHEBI:15377"/>
        <dbReference type="ChEBI" id="CHEBI:15378"/>
        <dbReference type="ChEBI" id="CHEBI:18420"/>
        <dbReference type="ChEBI" id="CHEBI:30616"/>
        <dbReference type="ChEBI" id="CHEBI:43474"/>
        <dbReference type="ChEBI" id="CHEBI:57306"/>
        <dbReference type="ChEBI" id="CHEBI:60492"/>
        <dbReference type="ChEBI" id="CHEBI:456216"/>
        <dbReference type="EC" id="6.6.1.1"/>
    </reaction>
</comment>
<comment type="pathway">
    <text>Porphyrin-containing compound metabolism; chlorophyll biosynthesis.</text>
</comment>
<comment type="similarity">
    <text evidence="2">Belongs to the Mg-chelatase subunits D/I family.</text>
</comment>
<name>CHLI_NOSS1</name>
<keyword id="KW-0002">3D-structure</keyword>
<keyword id="KW-0067">ATP-binding</keyword>
<keyword id="KW-0149">Chlorophyll biosynthesis</keyword>
<keyword id="KW-0436">Ligase</keyword>
<keyword id="KW-0547">Nucleotide-binding</keyword>
<keyword id="KW-0602">Photosynthesis</keyword>
<keyword id="KW-1185">Reference proteome</keyword>
<accession>P58571</accession>
<sequence>MTPTAQTTASARRVVFPFTAIVGQEEMKLALLLNVIDPKIGGVMIMGDRGTGKSTTIRALADLLPEIPVVANDPFNSDPSDPDLMSDEVRQKSGTGAEIPIEFKKVQMVDLPLGATEDRVCGTIDIEKALSEGVKAFEPGLLAKANRGILYVDEVNLLDDHLVDVLLDSAASGWNTVEREGISIRHPARFVLVGSGNPEEGELRPQLLDRFGMHAEIHTVKEPALRVQIVEQRSEFDQNPPTFLEKYNPEQTALQKKIVEAQKLLPEVKLDYDLRVKISEVCSELDVDGLRGDIVTNRAAKALTAYEGRTEVTVDDIRRVITLCLRHRLRKDPLESIDSGYKVEKVFARIFGVELLEDDSSQKNGAGQIKTGVR</sequence>
<dbReference type="EC" id="6.6.1.1"/>
<dbReference type="EMBL" id="BA000019">
    <property type="protein sequence ID" value="BAB77676.1"/>
    <property type="molecule type" value="Genomic_DNA"/>
</dbReference>
<dbReference type="PIR" id="AH1825">
    <property type="entry name" value="AH1825"/>
</dbReference>
<dbReference type="PDB" id="8OSF">
    <property type="method" value="EM"/>
    <property type="resolution" value="4.00 A"/>
    <property type="chains" value="A/B/C/D/E/F=2-374"/>
</dbReference>
<dbReference type="PDB" id="8OSG">
    <property type="method" value="EM"/>
    <property type="resolution" value="3.80 A"/>
    <property type="chains" value="A/B/C/D/E/F=2-374"/>
</dbReference>
<dbReference type="PDB" id="8OSH">
    <property type="method" value="EM"/>
    <property type="resolution" value="4.90 A"/>
    <property type="chains" value="A/B/C/D/E=2-374"/>
</dbReference>
<dbReference type="PDBsum" id="8OSF"/>
<dbReference type="PDBsum" id="8OSG"/>
<dbReference type="PDBsum" id="8OSH"/>
<dbReference type="EMDB" id="EMD-17151"/>
<dbReference type="EMDB" id="EMD-17152"/>
<dbReference type="EMDB" id="EMD-17153"/>
<dbReference type="SMR" id="P58571"/>
<dbReference type="STRING" id="103690.gene:10492157"/>
<dbReference type="KEGG" id="ana:all0152"/>
<dbReference type="eggNOG" id="COG1239">
    <property type="taxonomic scope" value="Bacteria"/>
</dbReference>
<dbReference type="OrthoDB" id="9775079at2"/>
<dbReference type="UniPathway" id="UPA00668"/>
<dbReference type="Proteomes" id="UP000002483">
    <property type="component" value="Chromosome"/>
</dbReference>
<dbReference type="GO" id="GO:0005524">
    <property type="term" value="F:ATP binding"/>
    <property type="evidence" value="ECO:0007669"/>
    <property type="project" value="UniProtKB-KW"/>
</dbReference>
<dbReference type="GO" id="GO:0016887">
    <property type="term" value="F:ATP hydrolysis activity"/>
    <property type="evidence" value="ECO:0007669"/>
    <property type="project" value="InterPro"/>
</dbReference>
<dbReference type="GO" id="GO:0016851">
    <property type="term" value="F:magnesium chelatase activity"/>
    <property type="evidence" value="ECO:0007669"/>
    <property type="project" value="UniProtKB-EC"/>
</dbReference>
<dbReference type="GO" id="GO:0015995">
    <property type="term" value="P:chlorophyll biosynthetic process"/>
    <property type="evidence" value="ECO:0007669"/>
    <property type="project" value="UniProtKB-UniPathway"/>
</dbReference>
<dbReference type="GO" id="GO:0015979">
    <property type="term" value="P:photosynthesis"/>
    <property type="evidence" value="ECO:0007669"/>
    <property type="project" value="UniProtKB-KW"/>
</dbReference>
<dbReference type="CDD" id="cd00009">
    <property type="entry name" value="AAA"/>
    <property type="match status" value="1"/>
</dbReference>
<dbReference type="FunFam" id="1.10.8.80:FF:000001">
    <property type="entry name" value="Mg-protoporphyrin IX chelatase"/>
    <property type="match status" value="1"/>
</dbReference>
<dbReference type="FunFam" id="3.40.50.300:FF:000601">
    <property type="entry name" value="Mg-protoporphyrin IX chelatase"/>
    <property type="match status" value="1"/>
</dbReference>
<dbReference type="Gene3D" id="1.10.8.80">
    <property type="entry name" value="Magnesium chelatase subunit I, C-Terminal domain"/>
    <property type="match status" value="1"/>
</dbReference>
<dbReference type="Gene3D" id="3.40.50.300">
    <property type="entry name" value="P-loop containing nucleotide triphosphate hydrolases"/>
    <property type="match status" value="1"/>
</dbReference>
<dbReference type="InterPro" id="IPR003593">
    <property type="entry name" value="AAA+_ATPase"/>
</dbReference>
<dbReference type="InterPro" id="IPR045006">
    <property type="entry name" value="CHLI-like"/>
</dbReference>
<dbReference type="InterPro" id="IPR041628">
    <property type="entry name" value="ChlI/MoxR_AAA_lid"/>
</dbReference>
<dbReference type="InterPro" id="IPR011775">
    <property type="entry name" value="Mg_chelatase_ATPase-isu"/>
</dbReference>
<dbReference type="InterPro" id="IPR000523">
    <property type="entry name" value="Mg_chelatse_chII-like_cat_dom"/>
</dbReference>
<dbReference type="InterPro" id="IPR027417">
    <property type="entry name" value="P-loop_NTPase"/>
</dbReference>
<dbReference type="NCBIfam" id="TIGR02030">
    <property type="entry name" value="BchI-ChlI"/>
    <property type="match status" value="1"/>
</dbReference>
<dbReference type="PANTHER" id="PTHR32039">
    <property type="entry name" value="MAGNESIUM-CHELATASE SUBUNIT CHLI"/>
    <property type="match status" value="1"/>
</dbReference>
<dbReference type="PANTHER" id="PTHR32039:SF9">
    <property type="entry name" value="MAGNESIUM-CHELATASE SUBUNIT CHLI-2, CHLOROPLASTIC"/>
    <property type="match status" value="1"/>
</dbReference>
<dbReference type="Pfam" id="PF17863">
    <property type="entry name" value="AAA_lid_2"/>
    <property type="match status" value="1"/>
</dbReference>
<dbReference type="Pfam" id="PF01078">
    <property type="entry name" value="Mg_chelatase"/>
    <property type="match status" value="1"/>
</dbReference>
<dbReference type="SMART" id="SM00382">
    <property type="entry name" value="AAA"/>
    <property type="match status" value="1"/>
</dbReference>
<dbReference type="SUPFAM" id="SSF52540">
    <property type="entry name" value="P-loop containing nucleoside triphosphate hydrolases"/>
    <property type="match status" value="1"/>
</dbReference>
<proteinExistence type="evidence at protein level"/>
<gene>
    <name type="primary">chlI</name>
    <name type="ordered locus">all0152</name>
</gene>
<reference key="1">
    <citation type="journal article" date="2001" name="DNA Res.">
        <title>Complete genomic sequence of the filamentous nitrogen-fixing cyanobacterium Anabaena sp. strain PCC 7120.</title>
        <authorList>
            <person name="Kaneko T."/>
            <person name="Nakamura Y."/>
            <person name="Wolk C.P."/>
            <person name="Kuritz T."/>
            <person name="Sasamoto S."/>
            <person name="Watanabe A."/>
            <person name="Iriguchi M."/>
            <person name="Ishikawa A."/>
            <person name="Kawashima K."/>
            <person name="Kimura T."/>
            <person name="Kishida Y."/>
            <person name="Kohara M."/>
            <person name="Matsumoto M."/>
            <person name="Matsuno A."/>
            <person name="Muraki A."/>
            <person name="Nakazaki N."/>
            <person name="Shimpo S."/>
            <person name="Sugimoto M."/>
            <person name="Takazawa M."/>
            <person name="Yamada M."/>
            <person name="Yasuda M."/>
            <person name="Tabata S."/>
        </authorList>
    </citation>
    <scope>NUCLEOTIDE SEQUENCE [LARGE SCALE GENOMIC DNA]</scope>
    <source>
        <strain>PCC 7120 / SAG 25.82 / UTEX 2576</strain>
    </source>
</reference>
<protein>
    <recommendedName>
        <fullName>Magnesium-chelatase subunit ChlI</fullName>
        <ecNumber>6.6.1.1</ecNumber>
    </recommendedName>
    <alternativeName>
        <fullName>Mg-protoporphyrin IX chelatase</fullName>
    </alternativeName>
</protein>
<feature type="chain" id="PRO_0000206861" description="Magnesium-chelatase subunit ChlI">
    <location>
        <begin position="1"/>
        <end position="374"/>
    </location>
</feature>
<feature type="binding site" evidence="1">
    <location>
        <begin position="47"/>
        <end position="54"/>
    </location>
    <ligand>
        <name>ATP</name>
        <dbReference type="ChEBI" id="CHEBI:30616"/>
    </ligand>
</feature>